<feature type="chain" id="PRO_0000214893" description="Protein TusC homolog">
    <location>
        <begin position="1"/>
        <end position="118"/>
    </location>
</feature>
<sequence>MSQLTYLFRSAPHGSAAGREGVDALLAASAYCEDITVIFIGDGVYQLLLGQEPSGILSKDYAPMLKLFDLYDIEQVFVCSESLAQRGLAQADLVIDAQALSLEQVKEKLQQAGKLLSF</sequence>
<keyword id="KW-0963">Cytoplasm</keyword>
<evidence type="ECO:0000250" key="1"/>
<evidence type="ECO:0000305" key="2"/>
<organism>
    <name type="scientific">Vibrio parahaemolyticus serotype O3:K6 (strain RIMD 2210633)</name>
    <dbReference type="NCBI Taxonomy" id="223926"/>
    <lineage>
        <taxon>Bacteria</taxon>
        <taxon>Pseudomonadati</taxon>
        <taxon>Pseudomonadota</taxon>
        <taxon>Gammaproteobacteria</taxon>
        <taxon>Vibrionales</taxon>
        <taxon>Vibrionaceae</taxon>
        <taxon>Vibrio</taxon>
    </lineage>
</organism>
<name>TUSC_VIBPA</name>
<gene>
    <name type="primary">tusC</name>
    <name type="ordered locus">VP2775</name>
</gene>
<comment type="function">
    <text evidence="1">Could be part of a sulfur-relay system.</text>
</comment>
<comment type="subcellular location">
    <subcellularLocation>
        <location evidence="1">Cytoplasm</location>
    </subcellularLocation>
</comment>
<comment type="similarity">
    <text evidence="2">Belongs to the DsrF/TusC family.</text>
</comment>
<accession>Q87L41</accession>
<dbReference type="EMBL" id="BA000031">
    <property type="protein sequence ID" value="BAC61038.1"/>
    <property type="molecule type" value="Genomic_DNA"/>
</dbReference>
<dbReference type="RefSeq" id="NP_799154.1">
    <property type="nucleotide sequence ID" value="NC_004603.1"/>
</dbReference>
<dbReference type="RefSeq" id="WP_005458285.1">
    <property type="nucleotide sequence ID" value="NC_004603.1"/>
</dbReference>
<dbReference type="SMR" id="Q87L41"/>
<dbReference type="GeneID" id="1190325"/>
<dbReference type="KEGG" id="vpa:VP2775"/>
<dbReference type="PATRIC" id="fig|223926.6.peg.2671"/>
<dbReference type="eggNOG" id="COG2923">
    <property type="taxonomic scope" value="Bacteria"/>
</dbReference>
<dbReference type="HOGENOM" id="CLU_155943_1_0_6"/>
<dbReference type="Proteomes" id="UP000002493">
    <property type="component" value="Chromosome 1"/>
</dbReference>
<dbReference type="GO" id="GO:0005737">
    <property type="term" value="C:cytoplasm"/>
    <property type="evidence" value="ECO:0007669"/>
    <property type="project" value="UniProtKB-SubCell"/>
</dbReference>
<dbReference type="Gene3D" id="3.40.1260.10">
    <property type="entry name" value="DsrEFH-like"/>
    <property type="match status" value="1"/>
</dbReference>
<dbReference type="InterPro" id="IPR027396">
    <property type="entry name" value="DsrEFH-like"/>
</dbReference>
<dbReference type="InterPro" id="IPR003787">
    <property type="entry name" value="Sulphur_relay_DsrE/F-like"/>
</dbReference>
<dbReference type="InterPro" id="IPR017462">
    <property type="entry name" value="Sulphur_relay_TusC/DsrF"/>
</dbReference>
<dbReference type="NCBIfam" id="NF001238">
    <property type="entry name" value="PRK00211.1"/>
    <property type="match status" value="1"/>
</dbReference>
<dbReference type="NCBIfam" id="TIGR03010">
    <property type="entry name" value="sulf_tusC_dsrF"/>
    <property type="match status" value="1"/>
</dbReference>
<dbReference type="PANTHER" id="PTHR38780">
    <property type="entry name" value="PROTEIN TUSC"/>
    <property type="match status" value="1"/>
</dbReference>
<dbReference type="PANTHER" id="PTHR38780:SF1">
    <property type="entry name" value="PROTEIN TUSC"/>
    <property type="match status" value="1"/>
</dbReference>
<dbReference type="Pfam" id="PF02635">
    <property type="entry name" value="DsrE"/>
    <property type="match status" value="1"/>
</dbReference>
<dbReference type="SUPFAM" id="SSF75169">
    <property type="entry name" value="DsrEFH-like"/>
    <property type="match status" value="1"/>
</dbReference>
<reference key="1">
    <citation type="journal article" date="2003" name="Lancet">
        <title>Genome sequence of Vibrio parahaemolyticus: a pathogenic mechanism distinct from that of V. cholerae.</title>
        <authorList>
            <person name="Makino K."/>
            <person name="Oshima K."/>
            <person name="Kurokawa K."/>
            <person name="Yokoyama K."/>
            <person name="Uda T."/>
            <person name="Tagomori K."/>
            <person name="Iijima Y."/>
            <person name="Najima M."/>
            <person name="Nakano M."/>
            <person name="Yamashita A."/>
            <person name="Kubota Y."/>
            <person name="Kimura S."/>
            <person name="Yasunaga T."/>
            <person name="Honda T."/>
            <person name="Shinagawa H."/>
            <person name="Hattori M."/>
            <person name="Iida T."/>
        </authorList>
    </citation>
    <scope>NUCLEOTIDE SEQUENCE [LARGE SCALE GENOMIC DNA]</scope>
    <source>
        <strain>RIMD 2210633</strain>
    </source>
</reference>
<protein>
    <recommendedName>
        <fullName>Protein TusC homolog</fullName>
    </recommendedName>
</protein>
<proteinExistence type="inferred from homology"/>